<proteinExistence type="inferred from homology"/>
<protein>
    <recommendedName>
        <fullName evidence="1">Regulator of telomere elongation helicase 1 homolog</fullName>
        <ecNumber evidence="1">5.6.2.-</ecNumber>
    </recommendedName>
</protein>
<sequence length="978" mass="109437">MPEYLINGIPVNFPFEPYQVQRDYMARVIECLQNSSNGVLESPTGTGKTLSLLCSSLAWILHKKAQVQASQRTNVSELKEFEFEKKKMGGGGGGPKPEMDKLLDELNENSGKEGGRWGVPKIIYASRTHSQLTQAMQEMKNTSYGFMRAVILGSRDQLCIHPEVAKEEGNAVKTNLCKAKIQARACSFYSRVEACKERPEITGSTIMDIEDLVRVSTKLKACPFFMSKELIENADVLFMPYNYLLDPKARKANNLELANTIIILDEAHNVDKMCEESASMQIRSSDIALCIDDVTSIMKVMDNTVAIPEDDDAKKDFTIDDLALLKEMLLSLEKTVDEIPVMFSQGGSTQPGTYIFEIFEKANIKEGNYHIIAQLLENIIQYIATITEKNNFVRRGGGLQILAESLSIMFAGSGPQYRESIDKCYKCHIDIEEQKKVRGNTKQADGWTATKQLVPSVKANAKVINFWCFNPGFGMRQLLGRNARSIILTSGTLAPLKPLISELDIPIAVKLENPHIIDGSQVCVKIVGQGPDKESLNSSYGNRDNPKYISSLGRTILSFCPIIPGGLLVFFPSYPLLNKCQEAWQETGIWAQISRTKPIFVEPRGKDQFLNTMTEYYAKINDPDGKGAVFMAVCRGKVSEGLDFADMNGRACIITGLPFPPLKDARVILKKRYLQEVRTRENEIISGDEWYSLEAARAVNQAIGRVIRHKNDYGAILLCDNRFHNPRQKAQLSSWIQKHLNTAQHPTFGPIVRELSQFFRNAEKTLPQAKLTRSLAPLGPEPPIALVPDSTSLLVSGETKKKLDDIKNNFIKIENSNAVTAFKLSDYQHAHRSDATAASGKDFLSRLNTQVRTIDFNDMSSAGPSSQAGLVAIHKRERSNESTMVTQQKKRKVVLIPQETISLDDSLEVLEVKPERQAPEDRVELLKVIKSSIVPAQYKRFLVVLTGYRNDRDFGTMMGGMVEIFNRPELYYLLKGEI</sequence>
<feature type="chain" id="PRO_0000370619" description="Regulator of telomere elongation helicase 1 homolog">
    <location>
        <begin position="1"/>
        <end position="978"/>
    </location>
</feature>
<feature type="domain" description="Helicase ATP-binding" evidence="1">
    <location>
        <begin position="7"/>
        <end position="318"/>
    </location>
</feature>
<feature type="short sequence motif" description="DEAH box">
    <location>
        <begin position="265"/>
        <end position="268"/>
    </location>
</feature>
<feature type="binding site" evidence="1">
    <location>
        <begin position="42"/>
        <end position="49"/>
    </location>
    <ligand>
        <name>ATP</name>
        <dbReference type="ChEBI" id="CHEBI:30616"/>
    </ligand>
</feature>
<feature type="binding site" evidence="1">
    <location>
        <position position="159"/>
    </location>
    <ligand>
        <name>[4Fe-4S] cluster</name>
        <dbReference type="ChEBI" id="CHEBI:49883"/>
    </ligand>
</feature>
<feature type="binding site" evidence="1">
    <location>
        <position position="177"/>
    </location>
    <ligand>
        <name>[4Fe-4S] cluster</name>
        <dbReference type="ChEBI" id="CHEBI:49883"/>
    </ligand>
</feature>
<feature type="binding site" evidence="1">
    <location>
        <position position="186"/>
    </location>
    <ligand>
        <name>[4Fe-4S] cluster</name>
        <dbReference type="ChEBI" id="CHEBI:49883"/>
    </ligand>
</feature>
<feature type="binding site" evidence="1">
    <location>
        <position position="222"/>
    </location>
    <ligand>
        <name>[4Fe-4S] cluster</name>
        <dbReference type="ChEBI" id="CHEBI:49883"/>
    </ligand>
</feature>
<keyword id="KW-0004">4Fe-4S</keyword>
<keyword id="KW-0067">ATP-binding</keyword>
<keyword id="KW-0227">DNA damage</keyword>
<keyword id="KW-0234">DNA repair</keyword>
<keyword id="KW-0238">DNA-binding</keyword>
<keyword id="KW-0347">Helicase</keyword>
<keyword id="KW-0378">Hydrolase</keyword>
<keyword id="KW-0408">Iron</keyword>
<keyword id="KW-0411">Iron-sulfur</keyword>
<keyword id="KW-0413">Isomerase</keyword>
<keyword id="KW-0479">Metal-binding</keyword>
<keyword id="KW-0547">Nucleotide-binding</keyword>
<keyword id="KW-0539">Nucleus</keyword>
<keyword id="KW-1185">Reference proteome</keyword>
<reference key="1">
    <citation type="submission" date="2007-03" db="EMBL/GenBank/DDBJ databases">
        <title>Annotation of Culex pipiens quinquefasciatus.</title>
        <authorList>
            <consortium name="The Broad Institute Genome Sequencing Platform"/>
            <person name="Atkinson P.W."/>
            <person name="Hemingway J."/>
            <person name="Christensen B.M."/>
            <person name="Higgs S."/>
            <person name="Kodira C.D."/>
            <person name="Hannick L.I."/>
            <person name="Megy K."/>
            <person name="O'Leary S.B."/>
            <person name="Pearson M."/>
            <person name="Haas B.J."/>
            <person name="Mauceli E."/>
            <person name="Wortman J.R."/>
            <person name="Lee N.H."/>
            <person name="Guigo R."/>
            <person name="Stanke M."/>
            <person name="Alvarado L."/>
            <person name="Amedeo P."/>
            <person name="Antoine C.H."/>
            <person name="Arensburger P."/>
            <person name="Bidwell S.L."/>
            <person name="Crawford M."/>
            <person name="Camaro F."/>
            <person name="Devon K."/>
            <person name="Engels R."/>
            <person name="Hammond M."/>
            <person name="Howarth C."/>
            <person name="Koehrsen M."/>
            <person name="Lawson D."/>
            <person name="Montgomery P."/>
            <person name="Nene V."/>
            <person name="Nusbaum C."/>
            <person name="Puiu D."/>
            <person name="Romero-Severson J."/>
            <person name="Severson D.W."/>
            <person name="Shumway M."/>
            <person name="Sisk P."/>
            <person name="Stolte C."/>
            <person name="Zeng Q."/>
            <person name="Eisenstadt E."/>
            <person name="Fraser-Liggett C.M."/>
            <person name="Strausberg R."/>
            <person name="Galagan J."/>
            <person name="Birren B."/>
            <person name="Collins F.H."/>
        </authorList>
    </citation>
    <scope>NUCLEOTIDE SEQUENCE [LARGE SCALE GENOMIC DNA]</scope>
    <source>
        <strain>JHB</strain>
    </source>
</reference>
<comment type="function">
    <text evidence="1">A probable ATP-dependent DNA helicase implicated in DNA repair and the maintenance of genomic stability. Acts as an anti-recombinase to counteract toxic recombination and limit crossover during meiosis. Regulates meiotic recombination and crossover homeostasis by physically dissociating strand invasion events and thereby promotes noncrossover repair by meiotic synthesis dependent strand annealing (SDSA) as well as disassembly of D loop recombination intermediates.</text>
</comment>
<comment type="catalytic activity">
    <reaction evidence="1">
        <text>ATP + H2O = ADP + phosphate + H(+)</text>
        <dbReference type="Rhea" id="RHEA:13065"/>
        <dbReference type="ChEBI" id="CHEBI:15377"/>
        <dbReference type="ChEBI" id="CHEBI:15378"/>
        <dbReference type="ChEBI" id="CHEBI:30616"/>
        <dbReference type="ChEBI" id="CHEBI:43474"/>
        <dbReference type="ChEBI" id="CHEBI:456216"/>
    </reaction>
</comment>
<comment type="subcellular location">
    <subcellularLocation>
        <location evidence="1">Nucleus</location>
    </subcellularLocation>
</comment>
<comment type="similarity">
    <text evidence="1">Belongs to the helicase family. RAD3/XPD subfamily.</text>
</comment>
<accession>B0W9F4</accession>
<organism>
    <name type="scientific">Culex quinquefasciatus</name>
    <name type="common">Southern house mosquito</name>
    <name type="synonym">Culex pungens</name>
    <dbReference type="NCBI Taxonomy" id="7176"/>
    <lineage>
        <taxon>Eukaryota</taxon>
        <taxon>Metazoa</taxon>
        <taxon>Ecdysozoa</taxon>
        <taxon>Arthropoda</taxon>
        <taxon>Hexapoda</taxon>
        <taxon>Insecta</taxon>
        <taxon>Pterygota</taxon>
        <taxon>Neoptera</taxon>
        <taxon>Endopterygota</taxon>
        <taxon>Diptera</taxon>
        <taxon>Nematocera</taxon>
        <taxon>Culicoidea</taxon>
        <taxon>Culicidae</taxon>
        <taxon>Culicinae</taxon>
        <taxon>Culicini</taxon>
        <taxon>Culex</taxon>
        <taxon>Culex</taxon>
    </lineage>
</organism>
<gene>
    <name type="ORF">CPIJ003765</name>
</gene>
<evidence type="ECO:0000255" key="1">
    <source>
        <dbReference type="HAMAP-Rule" id="MF_03065"/>
    </source>
</evidence>
<dbReference type="EC" id="5.6.2.-" evidence="1"/>
<dbReference type="EMBL" id="DS231864">
    <property type="protein sequence ID" value="EDS40179.1"/>
    <property type="molecule type" value="Genomic_DNA"/>
</dbReference>
<dbReference type="RefSeq" id="XP_001845338.1">
    <property type="nucleotide sequence ID" value="XM_001845286.1"/>
</dbReference>
<dbReference type="SMR" id="B0W9F4"/>
<dbReference type="FunCoup" id="B0W9F4">
    <property type="interactions" value="1798"/>
</dbReference>
<dbReference type="STRING" id="7176.B0W9F4"/>
<dbReference type="EnsemblMetazoa" id="CPIJ003765-RA">
    <property type="protein sequence ID" value="CPIJ003765-PA"/>
    <property type="gene ID" value="CPIJ003765"/>
</dbReference>
<dbReference type="KEGG" id="cqu:CpipJ_CPIJ003765"/>
<dbReference type="CTD" id="51750"/>
<dbReference type="VEuPathDB" id="VectorBase:CPIJ003765"/>
<dbReference type="VEuPathDB" id="VectorBase:CQUJHB016693"/>
<dbReference type="eggNOG" id="KOG1132">
    <property type="taxonomic scope" value="Eukaryota"/>
</dbReference>
<dbReference type="HOGENOM" id="CLU_006515_4_0_1"/>
<dbReference type="InParanoid" id="B0W9F4"/>
<dbReference type="OMA" id="NCATIVA"/>
<dbReference type="OrthoDB" id="19182at2759"/>
<dbReference type="PhylomeDB" id="B0W9F4"/>
<dbReference type="Proteomes" id="UP000002320">
    <property type="component" value="Unassembled WGS sequence"/>
</dbReference>
<dbReference type="GO" id="GO:0005634">
    <property type="term" value="C:nucleus"/>
    <property type="evidence" value="ECO:0000250"/>
    <property type="project" value="UniProtKB"/>
</dbReference>
<dbReference type="GO" id="GO:0051539">
    <property type="term" value="F:4 iron, 4 sulfur cluster binding"/>
    <property type="evidence" value="ECO:0007669"/>
    <property type="project" value="UniProtKB-UniRule"/>
</dbReference>
<dbReference type="GO" id="GO:0005524">
    <property type="term" value="F:ATP binding"/>
    <property type="evidence" value="ECO:0000250"/>
    <property type="project" value="UniProtKB"/>
</dbReference>
<dbReference type="GO" id="GO:0016887">
    <property type="term" value="F:ATP hydrolysis activity"/>
    <property type="evidence" value="ECO:0007669"/>
    <property type="project" value="RHEA"/>
</dbReference>
<dbReference type="GO" id="GO:0003677">
    <property type="term" value="F:DNA binding"/>
    <property type="evidence" value="ECO:0007669"/>
    <property type="project" value="UniProtKB-UniRule"/>
</dbReference>
<dbReference type="GO" id="GO:0003678">
    <property type="term" value="F:DNA helicase activity"/>
    <property type="evidence" value="ECO:0000250"/>
    <property type="project" value="UniProtKB"/>
</dbReference>
<dbReference type="GO" id="GO:0070182">
    <property type="term" value="F:DNA polymerase binding"/>
    <property type="evidence" value="ECO:0007669"/>
    <property type="project" value="TreeGrafter"/>
</dbReference>
<dbReference type="GO" id="GO:0046872">
    <property type="term" value="F:metal ion binding"/>
    <property type="evidence" value="ECO:0007669"/>
    <property type="project" value="UniProtKB-UniRule"/>
</dbReference>
<dbReference type="GO" id="GO:0006310">
    <property type="term" value="P:DNA recombination"/>
    <property type="evidence" value="ECO:0007669"/>
    <property type="project" value="InterPro"/>
</dbReference>
<dbReference type="GO" id="GO:0006281">
    <property type="term" value="P:DNA repair"/>
    <property type="evidence" value="ECO:0007669"/>
    <property type="project" value="UniProtKB-UniRule"/>
</dbReference>
<dbReference type="GO" id="GO:0006260">
    <property type="term" value="P:DNA replication"/>
    <property type="evidence" value="ECO:0007669"/>
    <property type="project" value="InterPro"/>
</dbReference>
<dbReference type="GO" id="GO:0045910">
    <property type="term" value="P:negative regulation of DNA recombination"/>
    <property type="evidence" value="ECO:0007669"/>
    <property type="project" value="TreeGrafter"/>
</dbReference>
<dbReference type="GO" id="GO:1904430">
    <property type="term" value="P:negative regulation of t-circle formation"/>
    <property type="evidence" value="ECO:0007669"/>
    <property type="project" value="TreeGrafter"/>
</dbReference>
<dbReference type="GO" id="GO:0010569">
    <property type="term" value="P:regulation of double-strand break repair via homologous recombination"/>
    <property type="evidence" value="ECO:0000250"/>
    <property type="project" value="UniProtKB"/>
</dbReference>
<dbReference type="GO" id="GO:0090657">
    <property type="term" value="P:telomeric loop disassembly"/>
    <property type="evidence" value="ECO:0007669"/>
    <property type="project" value="TreeGrafter"/>
</dbReference>
<dbReference type="CDD" id="cd18788">
    <property type="entry name" value="SF2_C_XPD"/>
    <property type="match status" value="1"/>
</dbReference>
<dbReference type="FunFam" id="3.40.50.300:FF:000431">
    <property type="entry name" value="Regulator of telomere elongation helicase 1"/>
    <property type="match status" value="1"/>
</dbReference>
<dbReference type="Gene3D" id="3.40.50.300">
    <property type="entry name" value="P-loop containing nucleotide triphosphate hydrolases"/>
    <property type="match status" value="2"/>
</dbReference>
<dbReference type="HAMAP" id="MF_03065">
    <property type="entry name" value="RTEL1"/>
    <property type="match status" value="1"/>
</dbReference>
<dbReference type="InterPro" id="IPR006555">
    <property type="entry name" value="ATP-dep_Helicase_C"/>
</dbReference>
<dbReference type="InterPro" id="IPR045028">
    <property type="entry name" value="DinG/Rad3-like"/>
</dbReference>
<dbReference type="InterPro" id="IPR014013">
    <property type="entry name" value="Helic_SF1/SF2_ATP-bd_DinG/Rad3"/>
</dbReference>
<dbReference type="InterPro" id="IPR006554">
    <property type="entry name" value="Helicase-like_DEXD_c2"/>
</dbReference>
<dbReference type="InterPro" id="IPR014001">
    <property type="entry name" value="Helicase_ATP-bd"/>
</dbReference>
<dbReference type="InterPro" id="IPR027417">
    <property type="entry name" value="P-loop_NTPase"/>
</dbReference>
<dbReference type="InterPro" id="IPR010614">
    <property type="entry name" value="RAD3-like_helicase_DEAD"/>
</dbReference>
<dbReference type="InterPro" id="IPR013020">
    <property type="entry name" value="Rad3/Chl1-like"/>
</dbReference>
<dbReference type="InterPro" id="IPR030845">
    <property type="entry name" value="RTEL1"/>
</dbReference>
<dbReference type="NCBIfam" id="TIGR00604">
    <property type="entry name" value="rad3"/>
    <property type="match status" value="1"/>
</dbReference>
<dbReference type="PANTHER" id="PTHR11472">
    <property type="entry name" value="DNA REPAIR DEAD HELICASE RAD3/XP-D SUBFAMILY MEMBER"/>
    <property type="match status" value="1"/>
</dbReference>
<dbReference type="PANTHER" id="PTHR11472:SF34">
    <property type="entry name" value="REGULATOR OF TELOMERE ELONGATION HELICASE 1"/>
    <property type="match status" value="1"/>
</dbReference>
<dbReference type="Pfam" id="PF23109">
    <property type="entry name" value="ARCH_RTEL1"/>
    <property type="match status" value="1"/>
</dbReference>
<dbReference type="Pfam" id="PF06733">
    <property type="entry name" value="DEAD_2"/>
    <property type="match status" value="1"/>
</dbReference>
<dbReference type="Pfam" id="PF13307">
    <property type="entry name" value="Helicase_C_2"/>
    <property type="match status" value="1"/>
</dbReference>
<dbReference type="SMART" id="SM00487">
    <property type="entry name" value="DEXDc"/>
    <property type="match status" value="1"/>
</dbReference>
<dbReference type="SMART" id="SM00488">
    <property type="entry name" value="DEXDc2"/>
    <property type="match status" value="1"/>
</dbReference>
<dbReference type="SMART" id="SM00491">
    <property type="entry name" value="HELICc2"/>
    <property type="match status" value="1"/>
</dbReference>
<dbReference type="SUPFAM" id="SSF52540">
    <property type="entry name" value="P-loop containing nucleoside triphosphate hydrolases"/>
    <property type="match status" value="2"/>
</dbReference>
<dbReference type="PROSITE" id="PS51193">
    <property type="entry name" value="HELICASE_ATP_BIND_2"/>
    <property type="match status" value="1"/>
</dbReference>
<name>RTEL1_CULQU</name>